<name>RL4_CYTH3</name>
<organism>
    <name type="scientific">Cytophaga hutchinsonii (strain ATCC 33406 / DSM 1761 / CIP 103989 / NBRC 15051 / NCIMB 9469 / D465)</name>
    <dbReference type="NCBI Taxonomy" id="269798"/>
    <lineage>
        <taxon>Bacteria</taxon>
        <taxon>Pseudomonadati</taxon>
        <taxon>Bacteroidota</taxon>
        <taxon>Cytophagia</taxon>
        <taxon>Cytophagales</taxon>
        <taxon>Cytophagaceae</taxon>
        <taxon>Cytophaga</taxon>
    </lineage>
</organism>
<keyword id="KW-1185">Reference proteome</keyword>
<keyword id="KW-0687">Ribonucleoprotein</keyword>
<keyword id="KW-0689">Ribosomal protein</keyword>
<keyword id="KW-0694">RNA-binding</keyword>
<keyword id="KW-0699">rRNA-binding</keyword>
<feature type="chain" id="PRO_1000052390" description="Large ribosomal subunit protein uL4">
    <location>
        <begin position="1"/>
        <end position="208"/>
    </location>
</feature>
<feature type="region of interest" description="Disordered" evidence="2">
    <location>
        <begin position="51"/>
        <end position="79"/>
    </location>
</feature>
<dbReference type="EMBL" id="CP000383">
    <property type="protein sequence ID" value="ABG60401.1"/>
    <property type="molecule type" value="Genomic_DNA"/>
</dbReference>
<dbReference type="RefSeq" id="WP_011586510.1">
    <property type="nucleotide sequence ID" value="NC_008255.1"/>
</dbReference>
<dbReference type="SMR" id="Q11QB3"/>
<dbReference type="STRING" id="269798.CHU_3161"/>
<dbReference type="KEGG" id="chu:CHU_3161"/>
<dbReference type="eggNOG" id="COG0088">
    <property type="taxonomic scope" value="Bacteria"/>
</dbReference>
<dbReference type="HOGENOM" id="CLU_041575_5_2_10"/>
<dbReference type="OrthoDB" id="9803201at2"/>
<dbReference type="Proteomes" id="UP000001822">
    <property type="component" value="Chromosome"/>
</dbReference>
<dbReference type="GO" id="GO:1990904">
    <property type="term" value="C:ribonucleoprotein complex"/>
    <property type="evidence" value="ECO:0007669"/>
    <property type="project" value="UniProtKB-KW"/>
</dbReference>
<dbReference type="GO" id="GO:0005840">
    <property type="term" value="C:ribosome"/>
    <property type="evidence" value="ECO:0007669"/>
    <property type="project" value="UniProtKB-KW"/>
</dbReference>
<dbReference type="GO" id="GO:0019843">
    <property type="term" value="F:rRNA binding"/>
    <property type="evidence" value="ECO:0007669"/>
    <property type="project" value="UniProtKB-UniRule"/>
</dbReference>
<dbReference type="GO" id="GO:0003735">
    <property type="term" value="F:structural constituent of ribosome"/>
    <property type="evidence" value="ECO:0007669"/>
    <property type="project" value="InterPro"/>
</dbReference>
<dbReference type="GO" id="GO:0006412">
    <property type="term" value="P:translation"/>
    <property type="evidence" value="ECO:0007669"/>
    <property type="project" value="UniProtKB-UniRule"/>
</dbReference>
<dbReference type="Gene3D" id="3.40.1370.10">
    <property type="match status" value="1"/>
</dbReference>
<dbReference type="HAMAP" id="MF_01328_B">
    <property type="entry name" value="Ribosomal_uL4_B"/>
    <property type="match status" value="1"/>
</dbReference>
<dbReference type="InterPro" id="IPR002136">
    <property type="entry name" value="Ribosomal_uL4"/>
</dbReference>
<dbReference type="InterPro" id="IPR013005">
    <property type="entry name" value="Ribosomal_uL4-like"/>
</dbReference>
<dbReference type="InterPro" id="IPR023574">
    <property type="entry name" value="Ribosomal_uL4_dom_sf"/>
</dbReference>
<dbReference type="NCBIfam" id="TIGR03953">
    <property type="entry name" value="rplD_bact"/>
    <property type="match status" value="1"/>
</dbReference>
<dbReference type="PANTHER" id="PTHR10746">
    <property type="entry name" value="50S RIBOSOMAL PROTEIN L4"/>
    <property type="match status" value="1"/>
</dbReference>
<dbReference type="PANTHER" id="PTHR10746:SF6">
    <property type="entry name" value="LARGE RIBOSOMAL SUBUNIT PROTEIN UL4M"/>
    <property type="match status" value="1"/>
</dbReference>
<dbReference type="Pfam" id="PF00573">
    <property type="entry name" value="Ribosomal_L4"/>
    <property type="match status" value="1"/>
</dbReference>
<dbReference type="SUPFAM" id="SSF52166">
    <property type="entry name" value="Ribosomal protein L4"/>
    <property type="match status" value="1"/>
</dbReference>
<accession>Q11QB3</accession>
<sequence length="208" mass="22985">MELSLLNIKGKDTGKKVVLSDDIFAVEPNNHAIYLDVKQYLAHQRQGTHKAKERAEVSFSTKKLKKQKGTGGARAGSRKSPIFVGGGTIFGPRPRTYGFKVNKKVKDLARKSAFSHKLKESNVTVLENFTLNAPKTKDYLAILKDLSLDTKKTLFVIADIDKNIILSSRNLKKAKVVSVDQINTYDLVNADKVVISEGSVSKIEALLN</sequence>
<gene>
    <name evidence="1" type="primary">rplD</name>
    <name type="ordered locus">CHU_3161</name>
</gene>
<protein>
    <recommendedName>
        <fullName evidence="1">Large ribosomal subunit protein uL4</fullName>
    </recommendedName>
    <alternativeName>
        <fullName evidence="3">50S ribosomal protein L4</fullName>
    </alternativeName>
</protein>
<comment type="function">
    <text evidence="1">One of the primary rRNA binding proteins, this protein initially binds near the 5'-end of the 23S rRNA. It is important during the early stages of 50S assembly. It makes multiple contacts with different domains of the 23S rRNA in the assembled 50S subunit and ribosome.</text>
</comment>
<comment type="function">
    <text evidence="1">Forms part of the polypeptide exit tunnel.</text>
</comment>
<comment type="subunit">
    <text evidence="1">Part of the 50S ribosomal subunit.</text>
</comment>
<comment type="similarity">
    <text evidence="1">Belongs to the universal ribosomal protein uL4 family.</text>
</comment>
<proteinExistence type="inferred from homology"/>
<evidence type="ECO:0000255" key="1">
    <source>
        <dbReference type="HAMAP-Rule" id="MF_01328"/>
    </source>
</evidence>
<evidence type="ECO:0000256" key="2">
    <source>
        <dbReference type="SAM" id="MobiDB-lite"/>
    </source>
</evidence>
<evidence type="ECO:0000305" key="3"/>
<reference key="1">
    <citation type="journal article" date="2007" name="Appl. Environ. Microbiol.">
        <title>Genome sequence of the cellulolytic gliding bacterium Cytophaga hutchinsonii.</title>
        <authorList>
            <person name="Xie G."/>
            <person name="Bruce D.C."/>
            <person name="Challacombe J.F."/>
            <person name="Chertkov O."/>
            <person name="Detter J.C."/>
            <person name="Gilna P."/>
            <person name="Han C.S."/>
            <person name="Lucas S."/>
            <person name="Misra M."/>
            <person name="Myers G.L."/>
            <person name="Richardson P."/>
            <person name="Tapia R."/>
            <person name="Thayer N."/>
            <person name="Thompson L.S."/>
            <person name="Brettin T.S."/>
            <person name="Henrissat B."/>
            <person name="Wilson D.B."/>
            <person name="McBride M.J."/>
        </authorList>
    </citation>
    <scope>NUCLEOTIDE SEQUENCE [LARGE SCALE GENOMIC DNA]</scope>
    <source>
        <strain>ATCC 33406 / DSM 1761 / JCM 20678 / CIP 103989 / IAM 12607 / NBRC 15051 / NCIMB 9469 / D465</strain>
    </source>
</reference>